<protein>
    <recommendedName>
        <fullName evidence="1">Peptide chain release factor 1</fullName>
        <shortName evidence="1">RF-1</shortName>
    </recommendedName>
</protein>
<proteinExistence type="inferred from homology"/>
<name>RF1_RHOPB</name>
<dbReference type="EMBL" id="CP000301">
    <property type="protein sequence ID" value="ABD86087.1"/>
    <property type="molecule type" value="Genomic_DNA"/>
</dbReference>
<dbReference type="SMR" id="Q21BZ9"/>
<dbReference type="STRING" id="316056.RPC_0512"/>
<dbReference type="KEGG" id="rpc:RPC_0512"/>
<dbReference type="eggNOG" id="COG0216">
    <property type="taxonomic scope" value="Bacteria"/>
</dbReference>
<dbReference type="HOGENOM" id="CLU_036856_0_1_5"/>
<dbReference type="OrthoDB" id="9806673at2"/>
<dbReference type="GO" id="GO:0005737">
    <property type="term" value="C:cytoplasm"/>
    <property type="evidence" value="ECO:0007669"/>
    <property type="project" value="UniProtKB-SubCell"/>
</dbReference>
<dbReference type="GO" id="GO:0016149">
    <property type="term" value="F:translation release factor activity, codon specific"/>
    <property type="evidence" value="ECO:0007669"/>
    <property type="project" value="UniProtKB-UniRule"/>
</dbReference>
<dbReference type="FunFam" id="3.30.160.20:FF:000004">
    <property type="entry name" value="Peptide chain release factor 1"/>
    <property type="match status" value="1"/>
</dbReference>
<dbReference type="FunFam" id="3.30.70.1660:FF:000002">
    <property type="entry name" value="Peptide chain release factor 1"/>
    <property type="match status" value="1"/>
</dbReference>
<dbReference type="FunFam" id="3.30.70.1660:FF:000004">
    <property type="entry name" value="Peptide chain release factor 1"/>
    <property type="match status" value="1"/>
</dbReference>
<dbReference type="Gene3D" id="3.30.160.20">
    <property type="match status" value="1"/>
</dbReference>
<dbReference type="Gene3D" id="3.30.70.1660">
    <property type="match status" value="2"/>
</dbReference>
<dbReference type="Gene3D" id="6.10.140.1950">
    <property type="match status" value="1"/>
</dbReference>
<dbReference type="HAMAP" id="MF_00093">
    <property type="entry name" value="Rel_fac_1"/>
    <property type="match status" value="1"/>
</dbReference>
<dbReference type="InterPro" id="IPR005139">
    <property type="entry name" value="PCRF"/>
</dbReference>
<dbReference type="InterPro" id="IPR000352">
    <property type="entry name" value="Pep_chain_release_fac_I"/>
</dbReference>
<dbReference type="InterPro" id="IPR045853">
    <property type="entry name" value="Pep_chain_release_fac_I_sf"/>
</dbReference>
<dbReference type="InterPro" id="IPR050057">
    <property type="entry name" value="Prokaryotic/Mito_RF"/>
</dbReference>
<dbReference type="InterPro" id="IPR004373">
    <property type="entry name" value="RF-1"/>
</dbReference>
<dbReference type="NCBIfam" id="TIGR00019">
    <property type="entry name" value="prfA"/>
    <property type="match status" value="1"/>
</dbReference>
<dbReference type="NCBIfam" id="NF001859">
    <property type="entry name" value="PRK00591.1"/>
    <property type="match status" value="1"/>
</dbReference>
<dbReference type="PANTHER" id="PTHR43804">
    <property type="entry name" value="LD18447P"/>
    <property type="match status" value="1"/>
</dbReference>
<dbReference type="PANTHER" id="PTHR43804:SF7">
    <property type="entry name" value="LD18447P"/>
    <property type="match status" value="1"/>
</dbReference>
<dbReference type="Pfam" id="PF03462">
    <property type="entry name" value="PCRF"/>
    <property type="match status" value="1"/>
</dbReference>
<dbReference type="Pfam" id="PF00472">
    <property type="entry name" value="RF-1"/>
    <property type="match status" value="1"/>
</dbReference>
<dbReference type="SMART" id="SM00937">
    <property type="entry name" value="PCRF"/>
    <property type="match status" value="1"/>
</dbReference>
<dbReference type="SUPFAM" id="SSF75620">
    <property type="entry name" value="Release factor"/>
    <property type="match status" value="1"/>
</dbReference>
<dbReference type="PROSITE" id="PS00745">
    <property type="entry name" value="RF_PROK_I"/>
    <property type="match status" value="1"/>
</dbReference>
<evidence type="ECO:0000255" key="1">
    <source>
        <dbReference type="HAMAP-Rule" id="MF_00093"/>
    </source>
</evidence>
<reference key="1">
    <citation type="submission" date="2006-03" db="EMBL/GenBank/DDBJ databases">
        <title>Complete sequence of Rhodopseudomonas palustris BisB18.</title>
        <authorList>
            <consortium name="US DOE Joint Genome Institute"/>
            <person name="Copeland A."/>
            <person name="Lucas S."/>
            <person name="Lapidus A."/>
            <person name="Barry K."/>
            <person name="Detter J.C."/>
            <person name="Glavina del Rio T."/>
            <person name="Hammon N."/>
            <person name="Israni S."/>
            <person name="Dalin E."/>
            <person name="Tice H."/>
            <person name="Pitluck S."/>
            <person name="Chain P."/>
            <person name="Malfatti S."/>
            <person name="Shin M."/>
            <person name="Vergez L."/>
            <person name="Schmutz J."/>
            <person name="Larimer F."/>
            <person name="Land M."/>
            <person name="Hauser L."/>
            <person name="Pelletier D.A."/>
            <person name="Kyrpides N."/>
            <person name="Anderson I."/>
            <person name="Oda Y."/>
            <person name="Harwood C.S."/>
            <person name="Richardson P."/>
        </authorList>
    </citation>
    <scope>NUCLEOTIDE SEQUENCE [LARGE SCALE GENOMIC DNA]</scope>
    <source>
        <strain>BisB18</strain>
    </source>
</reference>
<sequence length="361" mass="39600">MSLLPETKLDVLLAHHASLENQLQSQVGADTYVKLMRELAELNPLIEAVKAYRQVGAERGEIDALLADAATDAEMRAMAEAEHAALEAQEAELAQQIRVALLPKDAMDDRNVMLEIRAGTGGDEASLFAGDLFRMYEKFAVLQGWSVEVVSASEGTMGGYKEIIAEVKGRGAFAKLKFESGVHRVQRVPDTETQGRIHTSAATVAVLPEVEEVDVDIKPDDLRIETMRAQGAGGQHVNKTESAIRITHIPTGLQVMMQDSRSQHKNRASAMNILRSRIYDAEQQRIDSVRSAERKEKVGSGDRSERIRTYNFPQGRVTDHRINLTLYKLPQVIAGEALGELIDALTTEHQAAQLAAQGNAA</sequence>
<keyword id="KW-0963">Cytoplasm</keyword>
<keyword id="KW-0488">Methylation</keyword>
<keyword id="KW-0648">Protein biosynthesis</keyword>
<comment type="function">
    <text evidence="1">Peptide chain release factor 1 directs the termination of translation in response to the peptide chain termination codons UAG and UAA.</text>
</comment>
<comment type="subcellular location">
    <subcellularLocation>
        <location evidence="1">Cytoplasm</location>
    </subcellularLocation>
</comment>
<comment type="PTM">
    <text evidence="1">Methylated by PrmC. Methylation increases the termination efficiency of RF1.</text>
</comment>
<comment type="similarity">
    <text evidence="1">Belongs to the prokaryotic/mitochondrial release factor family.</text>
</comment>
<organism>
    <name type="scientific">Rhodopseudomonas palustris (strain BisB18)</name>
    <dbReference type="NCBI Taxonomy" id="316056"/>
    <lineage>
        <taxon>Bacteria</taxon>
        <taxon>Pseudomonadati</taxon>
        <taxon>Pseudomonadota</taxon>
        <taxon>Alphaproteobacteria</taxon>
        <taxon>Hyphomicrobiales</taxon>
        <taxon>Nitrobacteraceae</taxon>
        <taxon>Rhodopseudomonas</taxon>
    </lineage>
</organism>
<gene>
    <name evidence="1" type="primary">prfA</name>
    <name type="ordered locus">RPC_0512</name>
</gene>
<feature type="chain" id="PRO_0000263335" description="Peptide chain release factor 1">
    <location>
        <begin position="1"/>
        <end position="361"/>
    </location>
</feature>
<feature type="modified residue" description="N5-methylglutamine" evidence="1">
    <location>
        <position position="235"/>
    </location>
</feature>
<accession>Q21BZ9</accession>